<keyword id="KW-0150">Chloroplast</keyword>
<keyword id="KW-0934">Plastid</keyword>
<keyword id="KW-1185">Reference proteome</keyword>
<keyword id="KW-0687">Ribonucleoprotein</keyword>
<keyword id="KW-0689">Ribosomal protein</keyword>
<keyword id="KW-0694">RNA-binding</keyword>
<keyword id="KW-0699">rRNA-binding</keyword>
<name>RK20_CYAM1</name>
<reference key="1">
    <citation type="journal article" date="2003" name="DNA Res.">
        <title>Complete sequence and analysis of the plastid genome of the unicellular red alga Cyanidioschyzon merolae.</title>
        <authorList>
            <person name="Ohta N."/>
            <person name="Matsuzaki M."/>
            <person name="Misumi O."/>
            <person name="Miyagishima S.-Y."/>
            <person name="Nozaki H."/>
            <person name="Tanaka K."/>
            <person name="Shin-i T."/>
            <person name="Kohara Y."/>
            <person name="Kuroiwa T."/>
        </authorList>
    </citation>
    <scope>NUCLEOTIDE SEQUENCE [LARGE SCALE GENOMIC DNA]</scope>
    <source>
        <strain>NIES-3377 / 10D</strain>
    </source>
</reference>
<accession>Q85FX4</accession>
<feature type="chain" id="PRO_0000355530" description="Large ribosomal subunit protein bL20c">
    <location>
        <begin position="1"/>
        <end position="116"/>
    </location>
</feature>
<geneLocation type="chloroplast"/>
<sequence length="116" mass="13968">MVRIKRGNVARKRRQKILKAAKGFYACTTFRAANERVMKSWKASYRGRKLRKRDFRRLWITRLNAILPYKYSKFVHQLKQNQIALNRKMLYQLSCLDQKGFEQLYGLSLTRNHLIC</sequence>
<comment type="function">
    <text evidence="1">Binds directly to 23S ribosomal RNA and is necessary for the in vitro assembly process of the 50S ribosomal subunit. It is not involved in the protein synthesizing functions of that subunit.</text>
</comment>
<comment type="subcellular location">
    <subcellularLocation>
        <location>Plastid</location>
        <location>Chloroplast</location>
    </subcellularLocation>
</comment>
<comment type="similarity">
    <text evidence="1">Belongs to the bacterial ribosomal protein bL20 family.</text>
</comment>
<proteinExistence type="inferred from homology"/>
<dbReference type="EMBL" id="AB002583">
    <property type="protein sequence ID" value="BAC76219.1"/>
    <property type="molecule type" value="Genomic_DNA"/>
</dbReference>
<dbReference type="RefSeq" id="NP_849057.1">
    <property type="nucleotide sequence ID" value="NC_004799.1"/>
</dbReference>
<dbReference type="SMR" id="Q85FX4"/>
<dbReference type="STRING" id="280699.Q85FX4"/>
<dbReference type="EnsemblPlants" id="CMV151CT">
    <property type="protein sequence ID" value="CMV151CT"/>
    <property type="gene ID" value="CMV151C"/>
</dbReference>
<dbReference type="GeneID" id="844976"/>
<dbReference type="Gramene" id="CMV151CT">
    <property type="protein sequence ID" value="CMV151CT"/>
    <property type="gene ID" value="CMV151C"/>
</dbReference>
<dbReference type="KEGG" id="cme:CymeCp125"/>
<dbReference type="eggNOG" id="KOG4707">
    <property type="taxonomic scope" value="Eukaryota"/>
</dbReference>
<dbReference type="HOGENOM" id="CLU_123265_2_0_1"/>
<dbReference type="Proteomes" id="UP000007014">
    <property type="component" value="Chloroplast"/>
</dbReference>
<dbReference type="GO" id="GO:0009507">
    <property type="term" value="C:chloroplast"/>
    <property type="evidence" value="ECO:0007669"/>
    <property type="project" value="UniProtKB-SubCell"/>
</dbReference>
<dbReference type="GO" id="GO:1990904">
    <property type="term" value="C:ribonucleoprotein complex"/>
    <property type="evidence" value="ECO:0007669"/>
    <property type="project" value="UniProtKB-KW"/>
</dbReference>
<dbReference type="GO" id="GO:0005840">
    <property type="term" value="C:ribosome"/>
    <property type="evidence" value="ECO:0007669"/>
    <property type="project" value="UniProtKB-KW"/>
</dbReference>
<dbReference type="GO" id="GO:0019843">
    <property type="term" value="F:rRNA binding"/>
    <property type="evidence" value="ECO:0007669"/>
    <property type="project" value="UniProtKB-UniRule"/>
</dbReference>
<dbReference type="GO" id="GO:0003735">
    <property type="term" value="F:structural constituent of ribosome"/>
    <property type="evidence" value="ECO:0007669"/>
    <property type="project" value="InterPro"/>
</dbReference>
<dbReference type="GO" id="GO:0000027">
    <property type="term" value="P:ribosomal large subunit assembly"/>
    <property type="evidence" value="ECO:0007669"/>
    <property type="project" value="UniProtKB-UniRule"/>
</dbReference>
<dbReference type="GO" id="GO:0006412">
    <property type="term" value="P:translation"/>
    <property type="evidence" value="ECO:0007669"/>
    <property type="project" value="InterPro"/>
</dbReference>
<dbReference type="CDD" id="cd07026">
    <property type="entry name" value="Ribosomal_L20"/>
    <property type="match status" value="1"/>
</dbReference>
<dbReference type="Gene3D" id="6.10.160.10">
    <property type="match status" value="1"/>
</dbReference>
<dbReference type="Gene3D" id="1.10.1900.20">
    <property type="entry name" value="Ribosomal protein L20"/>
    <property type="match status" value="1"/>
</dbReference>
<dbReference type="HAMAP" id="MF_00382">
    <property type="entry name" value="Ribosomal_bL20"/>
    <property type="match status" value="1"/>
</dbReference>
<dbReference type="InterPro" id="IPR005813">
    <property type="entry name" value="Ribosomal_bL20"/>
</dbReference>
<dbReference type="InterPro" id="IPR035566">
    <property type="entry name" value="Ribosomal_protein_bL20_C"/>
</dbReference>
<dbReference type="NCBIfam" id="TIGR01032">
    <property type="entry name" value="rplT_bact"/>
    <property type="match status" value="1"/>
</dbReference>
<dbReference type="PANTHER" id="PTHR10986">
    <property type="entry name" value="39S RIBOSOMAL PROTEIN L20"/>
    <property type="match status" value="1"/>
</dbReference>
<dbReference type="Pfam" id="PF00453">
    <property type="entry name" value="Ribosomal_L20"/>
    <property type="match status" value="1"/>
</dbReference>
<dbReference type="PRINTS" id="PR00062">
    <property type="entry name" value="RIBOSOMALL20"/>
</dbReference>
<dbReference type="SUPFAM" id="SSF74731">
    <property type="entry name" value="Ribosomal protein L20"/>
    <property type="match status" value="1"/>
</dbReference>
<organism>
    <name type="scientific">Cyanidioschyzon merolae (strain NIES-3377 / 10D)</name>
    <name type="common">Unicellular red alga</name>
    <dbReference type="NCBI Taxonomy" id="280699"/>
    <lineage>
        <taxon>Eukaryota</taxon>
        <taxon>Rhodophyta</taxon>
        <taxon>Bangiophyceae</taxon>
        <taxon>Cyanidiales</taxon>
        <taxon>Cyanidiaceae</taxon>
        <taxon>Cyanidioschyzon</taxon>
    </lineage>
</organism>
<gene>
    <name evidence="1" type="primary">rpl20</name>
</gene>
<protein>
    <recommendedName>
        <fullName evidence="1">Large ribosomal subunit protein bL20c</fullName>
    </recommendedName>
    <alternativeName>
        <fullName evidence="2">50S ribosomal protein L20</fullName>
    </alternativeName>
</protein>
<evidence type="ECO:0000255" key="1">
    <source>
        <dbReference type="HAMAP-Rule" id="MF_00382"/>
    </source>
</evidence>
<evidence type="ECO:0000305" key="2"/>